<sequence>MPAIQSPSGKILQLEMENFKSYKGHQLVGPFKDFTAIIGPNGSGKSNLMDAISFVLGVRTGQLRGSQLKDLIYAFDDRDKEQRGRKAFVRLVYQMDDGVELRFTRSITSAGGSEYRIDNRVVNLDEYNGKLRSLGILVKARNFLVFQGDVESIASKNPKELTGLLEEISGSEELKKEYEGLEEKKASAEEKAALIYQKKKTIGNEKKLKKAQKEEAEKHLRLQEELKALKRERFLWQLYNIENDIEKANEDVDSEKSNRKDVMRELEKFEREAGKRKVEQAKYLKEIAQREKKIAEKSSKLGKIQPELLRFKEEIARIKAKIETNRKDVDKRKKEKGKHSKEIEQMQKSIKELNKKMELFNKKRQDSSGKLPMLDSQLQDYFRLKEEAGMKTIKLRDEHEVLERQRRTDLEALRNLEENYQQLINRKNDLDEQIKRFKDRQGEIETSSSKYKNETTSLKTELRALQEKHVNAREASAKLKTRIAELEDQLSDLTAERYENERDSRLTQAVESLKRLFQGVHGRMTDLCRPNRKKYNLAVTVAMGRFMDAVVVEDENTGKDCIKYLKEQRLPPMTFIPLQSVRVKQVFERLRNLGGTAKLVFDVIQFDPELEKAVLYAVGNTLVCDELEEAKVLSWSGERFKVVTVDGILLTKAGTMTGGTSGGMEAKSNKWDDKKIEGLKKNKEDFEQQLENIGSIREMQMKESEISGKISGLEKKIQYAEIEKKSIKDKLPQLEQEERNIIEEIDRIKPELSKARTEVDKRKTEMNKLEKRMNEIVDRIYKDFSQSVGVPNIRVYEETQLKTAEKEAEERLELSNQLAKLKYQLEYEQNRDVGSRIRKIESSISSLETDLEGIQKTMSERKETAVKITNEINNWKKEMEECKQKSEEYEKEILDWKKQASQATTSITKLNRQIHSKETQIEQLISQKQEITEKCELEHITLPVLSDAMEEDDSDGPQFDFSELGRAYLQERRPSAREKVEAEFRQKIESKTSEIERTAPNLRALDQYEAIQEKEKQVSQEFEAARKEEKQVADAFNTVKQKRYELFMEAFNHIASNIDKIYKQLTKSNTHPLGGTAYLNLENEDDPFLHGIKYTTMPPTKRFRDMEQLSGGEKTVAALALLFSIHSYRPSPFFILDEVDAALDNLNVAKVAKFIRSKSCQAARDNQDAEDGNGFQSIVISLKDSFYDKAEALVGVYRDTERSCSSTMSFDLRNYQES</sequence>
<organism>
    <name type="scientific">Arabidopsis thaliana</name>
    <name type="common">Mouse-ear cress</name>
    <dbReference type="NCBI Taxonomy" id="3702"/>
    <lineage>
        <taxon>Eukaryota</taxon>
        <taxon>Viridiplantae</taxon>
        <taxon>Streptophyta</taxon>
        <taxon>Embryophyta</taxon>
        <taxon>Tracheophyta</taxon>
        <taxon>Spermatophyta</taxon>
        <taxon>Magnoliopsida</taxon>
        <taxon>eudicotyledons</taxon>
        <taxon>Gunneridae</taxon>
        <taxon>Pentapetalae</taxon>
        <taxon>rosids</taxon>
        <taxon>malvids</taxon>
        <taxon>Brassicales</taxon>
        <taxon>Brassicaceae</taxon>
        <taxon>Camelineae</taxon>
        <taxon>Arabidopsis</taxon>
    </lineage>
</organism>
<comment type="function">
    <text evidence="1 3 4 6">Central component of cohesin, a complex required for chromosome cohesion during the cell cycle. The cohesin complex may form a large proteinaceous ring within which sister chromatids can be trapped. At anaphase, the complex is cleaved and dissociates from chromatin, allowing sister chromatids to segregate. Cohesion is coupled to DNA replication and is involved in DNA repair. The cohesin complex also plays an important role in spindle pole assembly during mitosis and in chromosomes movement (By similarity). Essential protein plant viability. Required for chromosome segregation (e.g. sister chromatid alignment) and cell division during embryogenesis.</text>
</comment>
<comment type="subunit">
    <text evidence="1">Cohesin complexes are composed of the SMC1 and SMC3 heterodimer attached via their SMC hinge domain, SCC3, and an alpha-kleisin subunit SCC1 linked to one SYN subunit (SYN1, SYN2, SYN3 or SYN4).</text>
</comment>
<comment type="subcellular location">
    <subcellularLocation>
        <location evidence="1">Nucleus</location>
    </subcellularLocation>
    <subcellularLocation>
        <location evidence="1">Chromosome</location>
    </subcellularLocation>
    <text evidence="1">Associates with chromatin.</text>
</comment>
<comment type="tissue specificity">
    <text evidence="5">Mostly expressed in flower buds and stems, and, to a lower extent, in leaves and roots.</text>
</comment>
<comment type="domain">
    <text evidence="1">The flexible SMC hinge domain, which separates the large intramolecular coiled coil regions, allows the heterotypic interaction with the corresponding domain of SMC1A or SMC1B, forming a V-shaped heterodimer. The two heads of the heterodimer are then connected by different ends of the cleavable RAD21 protein, forming a ring structure (By similarity).</text>
</comment>
<comment type="disruption phenotype">
    <text evidence="3 4 6">Altered chromosome dynamics and cell division during seed development, leading to aberrant mitoses and giant polyploid nuclei in endosperm as well as arrested embryos with a few small cells.</text>
</comment>
<comment type="similarity">
    <text evidence="7">Belongs to the SMC family. SMC1 subfamily.</text>
</comment>
<comment type="sequence caution" evidence="7">
    <conflict type="erroneous gene model prediction">
        <sequence resource="EMBL-CDS" id="CAB77587"/>
    </conflict>
</comment>
<reference key="1">
    <citation type="journal article" date="2005" name="J. Cell Sci.">
        <title>Characterization of Arabidopsis thaliana SMC1 and SMC3: evidence that AtSMC3 may function beyond chromosome cohesion.</title>
        <authorList>
            <person name="Lam W.S."/>
            <person name="Yang X."/>
            <person name="Makaroff C.A."/>
        </authorList>
    </citation>
    <scope>NUCLEOTIDE SEQUENCE [MRNA]</scope>
    <scope>TISSUE SPECIFICITY</scope>
    <source>
        <strain>cv. Columbia</strain>
        <strain>cv. Landsberg erecta</strain>
        <strain>cv. Wassilewskija</strain>
    </source>
</reference>
<reference key="2">
    <citation type="journal article" date="2000" name="Nature">
        <title>Sequence and analysis of chromosome 3 of the plant Arabidopsis thaliana.</title>
        <authorList>
            <person name="Salanoubat M."/>
            <person name="Lemcke K."/>
            <person name="Rieger M."/>
            <person name="Ansorge W."/>
            <person name="Unseld M."/>
            <person name="Fartmann B."/>
            <person name="Valle G."/>
            <person name="Bloecker H."/>
            <person name="Perez-Alonso M."/>
            <person name="Obermaier B."/>
            <person name="Delseny M."/>
            <person name="Boutry M."/>
            <person name="Grivell L.A."/>
            <person name="Mache R."/>
            <person name="Puigdomenech P."/>
            <person name="De Simone V."/>
            <person name="Choisne N."/>
            <person name="Artiguenave F."/>
            <person name="Robert C."/>
            <person name="Brottier P."/>
            <person name="Wincker P."/>
            <person name="Cattolico L."/>
            <person name="Weissenbach J."/>
            <person name="Saurin W."/>
            <person name="Quetier F."/>
            <person name="Schaefer M."/>
            <person name="Mueller-Auer S."/>
            <person name="Gabel C."/>
            <person name="Fuchs M."/>
            <person name="Benes V."/>
            <person name="Wurmbach E."/>
            <person name="Drzonek H."/>
            <person name="Erfle H."/>
            <person name="Jordan N."/>
            <person name="Bangert S."/>
            <person name="Wiedelmann R."/>
            <person name="Kranz H."/>
            <person name="Voss H."/>
            <person name="Holland R."/>
            <person name="Brandt P."/>
            <person name="Nyakatura G."/>
            <person name="Vezzi A."/>
            <person name="D'Angelo M."/>
            <person name="Pallavicini A."/>
            <person name="Toppo S."/>
            <person name="Simionati B."/>
            <person name="Conrad A."/>
            <person name="Hornischer K."/>
            <person name="Kauer G."/>
            <person name="Loehnert T.-H."/>
            <person name="Nordsiek G."/>
            <person name="Reichelt J."/>
            <person name="Scharfe M."/>
            <person name="Schoen O."/>
            <person name="Bargues M."/>
            <person name="Terol J."/>
            <person name="Climent J."/>
            <person name="Navarro P."/>
            <person name="Collado C."/>
            <person name="Perez-Perez A."/>
            <person name="Ottenwaelder B."/>
            <person name="Duchemin D."/>
            <person name="Cooke R."/>
            <person name="Laudie M."/>
            <person name="Berger-Llauro C."/>
            <person name="Purnelle B."/>
            <person name="Masuy D."/>
            <person name="de Haan M."/>
            <person name="Maarse A.C."/>
            <person name="Alcaraz J.-P."/>
            <person name="Cottet A."/>
            <person name="Casacuberta E."/>
            <person name="Monfort A."/>
            <person name="Argiriou A."/>
            <person name="Flores M."/>
            <person name="Liguori R."/>
            <person name="Vitale D."/>
            <person name="Mannhaupt G."/>
            <person name="Haase D."/>
            <person name="Schoof H."/>
            <person name="Rudd S."/>
            <person name="Zaccaria P."/>
            <person name="Mewes H.-W."/>
            <person name="Mayer K.F.X."/>
            <person name="Kaul S."/>
            <person name="Town C.D."/>
            <person name="Koo H.L."/>
            <person name="Tallon L.J."/>
            <person name="Jenkins J."/>
            <person name="Rooney T."/>
            <person name="Rizzo M."/>
            <person name="Walts A."/>
            <person name="Utterback T."/>
            <person name="Fujii C.Y."/>
            <person name="Shea T.P."/>
            <person name="Creasy T.H."/>
            <person name="Haas B."/>
            <person name="Maiti R."/>
            <person name="Wu D."/>
            <person name="Peterson J."/>
            <person name="Van Aken S."/>
            <person name="Pai G."/>
            <person name="Militscher J."/>
            <person name="Sellers P."/>
            <person name="Gill J.E."/>
            <person name="Feldblyum T.V."/>
            <person name="Preuss D."/>
            <person name="Lin X."/>
            <person name="Nierman W.C."/>
            <person name="Salzberg S.L."/>
            <person name="White O."/>
            <person name="Venter J.C."/>
            <person name="Fraser C.M."/>
            <person name="Kaneko T."/>
            <person name="Nakamura Y."/>
            <person name="Sato S."/>
            <person name="Kato T."/>
            <person name="Asamizu E."/>
            <person name="Sasamoto S."/>
            <person name="Kimura T."/>
            <person name="Idesawa K."/>
            <person name="Kawashima K."/>
            <person name="Kishida Y."/>
            <person name="Kiyokawa C."/>
            <person name="Kohara M."/>
            <person name="Matsumoto M."/>
            <person name="Matsuno A."/>
            <person name="Muraki A."/>
            <person name="Nakayama S."/>
            <person name="Nakazaki N."/>
            <person name="Shinpo S."/>
            <person name="Takeuchi C."/>
            <person name="Wada T."/>
            <person name="Watanabe A."/>
            <person name="Yamada M."/>
            <person name="Yasuda M."/>
            <person name="Tabata S."/>
        </authorList>
    </citation>
    <scope>NUCLEOTIDE SEQUENCE [LARGE SCALE GENOMIC DNA]</scope>
    <source>
        <strain>cv. Columbia</strain>
    </source>
</reference>
<reference key="3">
    <citation type="journal article" date="2017" name="Plant J.">
        <title>Araport11: a complete reannotation of the Arabidopsis thaliana reference genome.</title>
        <authorList>
            <person name="Cheng C.Y."/>
            <person name="Krishnakumar V."/>
            <person name="Chan A.P."/>
            <person name="Thibaud-Nissen F."/>
            <person name="Schobel S."/>
            <person name="Town C.D."/>
        </authorList>
    </citation>
    <scope>GENOME REANNOTATION</scope>
    <source>
        <strain>cv. Columbia</strain>
    </source>
</reference>
<reference key="4">
    <citation type="submission" date="2006-07" db="EMBL/GenBank/DDBJ databases">
        <title>Large-scale analysis of RIKEN Arabidopsis full-length (RAFL) cDNAs.</title>
        <authorList>
            <person name="Totoki Y."/>
            <person name="Seki M."/>
            <person name="Ishida J."/>
            <person name="Nakajima M."/>
            <person name="Enju A."/>
            <person name="Kamiya A."/>
            <person name="Narusaka M."/>
            <person name="Shin-i T."/>
            <person name="Nakagawa M."/>
            <person name="Sakamoto N."/>
            <person name="Oishi K."/>
            <person name="Kohara Y."/>
            <person name="Kobayashi M."/>
            <person name="Toyoda A."/>
            <person name="Sakaki Y."/>
            <person name="Sakurai T."/>
            <person name="Iida K."/>
            <person name="Akiyama K."/>
            <person name="Satou M."/>
            <person name="Toyoda T."/>
            <person name="Konagaya A."/>
            <person name="Carninci P."/>
            <person name="Kawai J."/>
            <person name="Hayashizaki Y."/>
            <person name="Shinozaki K."/>
        </authorList>
    </citation>
    <scope>NUCLEOTIDE SEQUENCE [LARGE SCALE MRNA] OF 1-332</scope>
    <source>
        <strain>cv. Columbia</strain>
    </source>
</reference>
<reference key="5">
    <citation type="journal article" date="2002" name="Plant J.">
        <title>Condensin and cohesin knockouts in Arabidopsis exhibit a titan seed phenotype.</title>
        <authorList>
            <person name="Liu C.-M."/>
            <person name="McElver J."/>
            <person name="Tzafrir I."/>
            <person name="Joosen R."/>
            <person name="Wittich P."/>
            <person name="Patton D."/>
            <person name="Van Lammeren A.A.M."/>
            <person name="Meinke D."/>
        </authorList>
    </citation>
    <scope>FUNCTION</scope>
    <scope>DISRUPTION PHENOTYPE</scope>
</reference>
<reference key="6">
    <citation type="journal article" date="2002" name="Plant Physiol.">
        <title>Diversity of TITAN functions in Arabidopsis seed development.</title>
        <authorList>
            <person name="Tzafrir I."/>
            <person name="McElver J.A."/>
            <person name="Liu C.-M."/>
            <person name="Yang L.J."/>
            <person name="Wu J.Q."/>
            <person name="Martinez A."/>
            <person name="Patton D.A."/>
            <person name="Meinke D.W."/>
        </authorList>
    </citation>
    <scope>FUNCTION</scope>
    <scope>DISRUPTION PHENOTYPE</scope>
</reference>
<reference key="7">
    <citation type="journal article" date="2009" name="Chromosoma">
        <title>Cohesin gene defects may impair sister chromatid alignment and genome stability in Arabidopsis thaliana.</title>
        <authorList>
            <person name="Schubert V."/>
            <person name="Weissleder A."/>
            <person name="Ali H."/>
            <person name="Fuchs J."/>
            <person name="Lermontova I."/>
            <person name="Meister A."/>
            <person name="Schubert I."/>
        </authorList>
    </citation>
    <scope>FUNCTION</scope>
    <scope>DISRUPTION PHENOTYPE</scope>
</reference>
<gene>
    <name type="primary">SMC1</name>
    <name type="synonym">TTN8</name>
    <name type="ordered locus">At3g54670</name>
    <name type="ORF">T5N23.30</name>
</gene>
<dbReference type="EMBL" id="AY567966">
    <property type="protein sequence ID" value="AAS68515.1"/>
    <property type="molecule type" value="mRNA"/>
</dbReference>
<dbReference type="EMBL" id="AL138650">
    <property type="protein sequence ID" value="CAB77587.1"/>
    <property type="status" value="ALT_SEQ"/>
    <property type="molecule type" value="Genomic_DNA"/>
</dbReference>
<dbReference type="EMBL" id="CP002686">
    <property type="protein sequence ID" value="AEE79263.2"/>
    <property type="molecule type" value="Genomic_DNA"/>
</dbReference>
<dbReference type="EMBL" id="AK227781">
    <property type="protein sequence ID" value="BAE99763.1"/>
    <property type="molecule type" value="mRNA"/>
</dbReference>
<dbReference type="PIR" id="T47626">
    <property type="entry name" value="T47626"/>
</dbReference>
<dbReference type="RefSeq" id="NP_001319748.1">
    <property type="nucleotide sequence ID" value="NM_001339686.1"/>
</dbReference>
<dbReference type="SMR" id="Q6Q1P4"/>
<dbReference type="BioGRID" id="9948">
    <property type="interactions" value="2"/>
</dbReference>
<dbReference type="FunCoup" id="Q6Q1P4">
    <property type="interactions" value="3354"/>
</dbReference>
<dbReference type="STRING" id="3702.Q6Q1P4"/>
<dbReference type="iPTMnet" id="Q6Q1P4"/>
<dbReference type="PaxDb" id="3702-AT3G54670.3"/>
<dbReference type="ProteomicsDB" id="228196"/>
<dbReference type="EnsemblPlants" id="AT3G54670.1">
    <property type="protein sequence ID" value="AT3G54670.1"/>
    <property type="gene ID" value="AT3G54670"/>
</dbReference>
<dbReference type="GeneID" id="824632"/>
<dbReference type="Gramene" id="AT3G54670.1">
    <property type="protein sequence ID" value="AT3G54670.1"/>
    <property type="gene ID" value="AT3G54670"/>
</dbReference>
<dbReference type="KEGG" id="ath:AT3G54670"/>
<dbReference type="Araport" id="AT3G54670"/>
<dbReference type="TAIR" id="AT3G54670">
    <property type="gene designation" value="TTN8"/>
</dbReference>
<dbReference type="eggNOG" id="KOG0018">
    <property type="taxonomic scope" value="Eukaryota"/>
</dbReference>
<dbReference type="HOGENOM" id="CLU_001042_0_1_1"/>
<dbReference type="InParanoid" id="Q6Q1P4"/>
<dbReference type="OMA" id="KHMDFQR"/>
<dbReference type="PRO" id="PR:Q6Q1P4"/>
<dbReference type="Proteomes" id="UP000006548">
    <property type="component" value="Chromosome 3"/>
</dbReference>
<dbReference type="ExpressionAtlas" id="Q6Q1P4">
    <property type="expression patterns" value="baseline and differential"/>
</dbReference>
<dbReference type="GO" id="GO:0008278">
    <property type="term" value="C:cohesin complex"/>
    <property type="evidence" value="ECO:0000250"/>
    <property type="project" value="TAIR"/>
</dbReference>
<dbReference type="GO" id="GO:0005634">
    <property type="term" value="C:nucleus"/>
    <property type="evidence" value="ECO:0007669"/>
    <property type="project" value="UniProtKB-SubCell"/>
</dbReference>
<dbReference type="GO" id="GO:0005524">
    <property type="term" value="F:ATP binding"/>
    <property type="evidence" value="ECO:0007669"/>
    <property type="project" value="UniProtKB-KW"/>
</dbReference>
<dbReference type="GO" id="GO:0016887">
    <property type="term" value="F:ATP hydrolysis activity"/>
    <property type="evidence" value="ECO:0007669"/>
    <property type="project" value="InterPro"/>
</dbReference>
<dbReference type="GO" id="GO:0051301">
    <property type="term" value="P:cell division"/>
    <property type="evidence" value="ECO:0007669"/>
    <property type="project" value="UniProtKB-KW"/>
</dbReference>
<dbReference type="GO" id="GO:0007059">
    <property type="term" value="P:chromosome segregation"/>
    <property type="evidence" value="ECO:0000315"/>
    <property type="project" value="UniProtKB"/>
</dbReference>
<dbReference type="GO" id="GO:0006281">
    <property type="term" value="P:DNA repair"/>
    <property type="evidence" value="ECO:0007669"/>
    <property type="project" value="UniProtKB-KW"/>
</dbReference>
<dbReference type="GO" id="GO:0051321">
    <property type="term" value="P:meiotic cell cycle"/>
    <property type="evidence" value="ECO:0007669"/>
    <property type="project" value="UniProtKB-KW"/>
</dbReference>
<dbReference type="GO" id="GO:0007062">
    <property type="term" value="P:sister chromatid cohesion"/>
    <property type="evidence" value="ECO:0000315"/>
    <property type="project" value="TAIR"/>
</dbReference>
<dbReference type="CDD" id="cd03275">
    <property type="entry name" value="ABC_SMC1_euk"/>
    <property type="match status" value="1"/>
</dbReference>
<dbReference type="FunFam" id="3.40.50.300:FF:000564">
    <property type="entry name" value="Structural maintenance of chromosomes 1A"/>
    <property type="match status" value="1"/>
</dbReference>
<dbReference type="FunFam" id="3.40.50.300:FF:002923">
    <property type="entry name" value="Structural maintenance of chromosomes protein"/>
    <property type="match status" value="1"/>
</dbReference>
<dbReference type="Gene3D" id="1.20.1060.20">
    <property type="match status" value="1"/>
</dbReference>
<dbReference type="Gene3D" id="1.20.5.170">
    <property type="match status" value="1"/>
</dbReference>
<dbReference type="Gene3D" id="3.30.70.1620">
    <property type="match status" value="1"/>
</dbReference>
<dbReference type="Gene3D" id="3.40.50.300">
    <property type="entry name" value="P-loop containing nucleotide triphosphate hydrolases"/>
    <property type="match status" value="2"/>
</dbReference>
<dbReference type="InterPro" id="IPR027417">
    <property type="entry name" value="P-loop_NTPase"/>
</dbReference>
<dbReference type="InterPro" id="IPR003395">
    <property type="entry name" value="RecF/RecN/SMC_N"/>
</dbReference>
<dbReference type="InterPro" id="IPR024704">
    <property type="entry name" value="SMC"/>
</dbReference>
<dbReference type="InterPro" id="IPR028468">
    <property type="entry name" value="Smc1_ABC"/>
</dbReference>
<dbReference type="InterPro" id="IPR010935">
    <property type="entry name" value="SMC_hinge"/>
</dbReference>
<dbReference type="InterPro" id="IPR036277">
    <property type="entry name" value="SMC_hinge_sf"/>
</dbReference>
<dbReference type="PANTHER" id="PTHR18937:SF12">
    <property type="entry name" value="STRUCTURAL MAINTENANCE OF CHROMOSOMES PROTEIN"/>
    <property type="match status" value="1"/>
</dbReference>
<dbReference type="PANTHER" id="PTHR18937">
    <property type="entry name" value="STRUCTURAL MAINTENANCE OF CHROMOSOMES SMC FAMILY MEMBER"/>
    <property type="match status" value="1"/>
</dbReference>
<dbReference type="Pfam" id="PF06470">
    <property type="entry name" value="SMC_hinge"/>
    <property type="match status" value="1"/>
</dbReference>
<dbReference type="Pfam" id="PF02463">
    <property type="entry name" value="SMC_N"/>
    <property type="match status" value="1"/>
</dbReference>
<dbReference type="PIRSF" id="PIRSF005719">
    <property type="entry name" value="SMC"/>
    <property type="match status" value="1"/>
</dbReference>
<dbReference type="SMART" id="SM00968">
    <property type="entry name" value="SMC_hinge"/>
    <property type="match status" value="1"/>
</dbReference>
<dbReference type="SUPFAM" id="SSF52540">
    <property type="entry name" value="P-loop containing nucleoside triphosphate hydrolases"/>
    <property type="match status" value="2"/>
</dbReference>
<dbReference type="SUPFAM" id="SSF75553">
    <property type="entry name" value="Smc hinge domain"/>
    <property type="match status" value="1"/>
</dbReference>
<keyword id="KW-0067">ATP-binding</keyword>
<keyword id="KW-0131">Cell cycle</keyword>
<keyword id="KW-0132">Cell division</keyword>
<keyword id="KW-0158">Chromosome</keyword>
<keyword id="KW-0175">Coiled coil</keyword>
<keyword id="KW-0227">DNA damage</keyword>
<keyword id="KW-0234">DNA repair</keyword>
<keyword id="KW-0469">Meiosis</keyword>
<keyword id="KW-0498">Mitosis</keyword>
<keyword id="KW-0547">Nucleotide-binding</keyword>
<keyword id="KW-0539">Nucleus</keyword>
<keyword id="KW-1185">Reference proteome</keyword>
<keyword id="KW-0677">Repeat</keyword>
<protein>
    <recommendedName>
        <fullName>Structural maintenance of chromosomes protein 1</fullName>
        <shortName>SMC protein 1</shortName>
        <shortName>SMC-1</shortName>
    </recommendedName>
    <alternativeName>
        <fullName>Chromosome segregation protein SMC-1</fullName>
    </alternativeName>
    <alternativeName>
        <fullName>Cohesin complex subunit SMC-1</fullName>
    </alternativeName>
    <alternativeName>
        <fullName>Protein TITAN8</fullName>
    </alternativeName>
</protein>
<name>SMC1_ARATH</name>
<evidence type="ECO:0000250" key="1"/>
<evidence type="ECO:0000255" key="2"/>
<evidence type="ECO:0000269" key="3">
    <source>
    </source>
</evidence>
<evidence type="ECO:0000269" key="4">
    <source>
    </source>
</evidence>
<evidence type="ECO:0000269" key="5">
    <source>
    </source>
</evidence>
<evidence type="ECO:0000269" key="6">
    <source>
    </source>
</evidence>
<evidence type="ECO:0000305" key="7"/>
<accession>Q6Q1P4</accession>
<accession>F4JE01</accession>
<accession>F4JE02</accession>
<accession>Q0WSY5</accession>
<accession>Q9M1T3</accession>
<proteinExistence type="evidence at transcript level"/>
<feature type="chain" id="PRO_0000421562" description="Structural maintenance of chromosomes protein 1">
    <location>
        <begin position="1"/>
        <end position="1218"/>
    </location>
</feature>
<feature type="domain" description="Zinc-hook">
    <location>
        <begin position="11"/>
        <end position="1200"/>
    </location>
</feature>
<feature type="domain" description="SMC hinge">
    <location>
        <begin position="518"/>
        <end position="632"/>
    </location>
</feature>
<feature type="coiled-coil region" evidence="2">
    <location>
        <begin position="159"/>
        <end position="505"/>
    </location>
</feature>
<feature type="coiled-coil region" evidence="2">
    <location>
        <begin position="671"/>
        <end position="938"/>
    </location>
</feature>
<feature type="coiled-coil region" evidence="2">
    <location>
        <begin position="1003"/>
        <end position="1035"/>
    </location>
</feature>
<feature type="short sequence motif" description="Nuclear localization signal 1" evidence="1">
    <location>
        <begin position="183"/>
        <end position="190"/>
    </location>
</feature>
<feature type="short sequence motif" description="Nuclear localization signal 2" evidence="1">
    <location>
        <begin position="425"/>
        <end position="432"/>
    </location>
</feature>
<feature type="binding site" evidence="2">
    <location>
        <begin position="39"/>
        <end position="46"/>
    </location>
    <ligand>
        <name>ATP</name>
        <dbReference type="ChEBI" id="CHEBI:30616"/>
    </ligand>
</feature>
<feature type="sequence conflict" description="In Ref. 1; AAS68515." evidence="7" ref="1">
    <original>L</original>
    <variation>P</variation>
    <location>
        <position position="818"/>
    </location>
</feature>